<proteinExistence type="inferred from homology"/>
<organism>
    <name type="scientific">Mycobacterium tuberculosis (strain CDC 1551 / Oshkosh)</name>
    <dbReference type="NCBI Taxonomy" id="83331"/>
    <lineage>
        <taxon>Bacteria</taxon>
        <taxon>Bacillati</taxon>
        <taxon>Actinomycetota</taxon>
        <taxon>Actinomycetes</taxon>
        <taxon>Mycobacteriales</taxon>
        <taxon>Mycobacteriaceae</taxon>
        <taxon>Mycobacterium</taxon>
        <taxon>Mycobacterium tuberculosis complex</taxon>
    </lineage>
</organism>
<protein>
    <recommendedName>
        <fullName>Uncharacterized PE-PGRS family protein PE_PGRS46</fullName>
    </recommendedName>
</protein>
<keyword id="KW-1185">Reference proteome</keyword>
<sequence>MSFVIAVPEALTMAASDLANIGSTINAANAAAALPTTGVVAAAADEVSAALAALFGSYAQSYHAFGAQLSAFHAQFVQSLTNGARSYVVAEATSAAPLQDLLGVVNAPAQALLGRPLIGNGANGADGTGAPGGPGGLLLGNGGNGGSGAPGQPGGAGGDAGLIGNGGTGGKGGDGLVGSGAAGGVGGRGGWLLGNGGTGGAGGAAGATLVGGTGGVGGATGLIGSGGFGGAGGAAAGVGTTGGVGGSGGVGGVFGNGGFGGAGGLGAAGGVGGTASYFGTGGGGGVGGDGAPGGDGGAGPLLIGNGGVGGLGGAGAAGGNGGAGGMLLGDGGAGGQGGPAVAGVLGGMPGAGGNGGNANWFGSGGAGGQGGTGLAGTNGVNPGSIANPNTGANGTDNSGNGNQTGGNGGPGPAGGVGEAGGVGGQGGLGESLDGNDGTGGKGGAGGTAGTDGGAGGAGGAGGIGETDGSAGGVATGGEGGDGATGGVDGGVGGAGGKGGQGHNTGVGDAFGGDGGIGGDGNGALGAAGGNGGTGGAGGNGGRGGMLIGNGGAGGAGGTGGTGGGGAAGFAGGVGGAGGEGLTDGAGTAEGGTGGLGGLGGVGGTGGMGGSGGVGGNGGAAGSLIGLGGGGGAGGVGGTGGIGGIGGAGGNGGAGGAGTTTGGGATIGGGGGTGGVGGAGGTGGTGGAGGTTGGSGGAGGLIGWAGAAGGTGAGGTGGQGGLGGQGGNGGNGGTGATGGQGGDFALGGNGGAGGAGGSPGGSSGIQGNMGPPGTQGADG</sequence>
<comment type="similarity">
    <text evidence="3">Belongs to the mycobacterial PE family. PGRS subfamily.</text>
</comment>
<comment type="sequence caution" evidence="3">
    <conflict type="erroneous initiation">
        <sequence resource="EMBL-CDS" id="AAK47026"/>
    </conflict>
</comment>
<reference key="1">
    <citation type="journal article" date="2002" name="J. Bacteriol.">
        <title>Whole-genome comparison of Mycobacterium tuberculosis clinical and laboratory strains.</title>
        <authorList>
            <person name="Fleischmann R.D."/>
            <person name="Alland D."/>
            <person name="Eisen J.A."/>
            <person name="Carpenter L."/>
            <person name="White O."/>
            <person name="Peterson J.D."/>
            <person name="DeBoy R.T."/>
            <person name="Dodson R.J."/>
            <person name="Gwinn M.L."/>
            <person name="Haft D.H."/>
            <person name="Hickey E.K."/>
            <person name="Kolonay J.F."/>
            <person name="Nelson W.C."/>
            <person name="Umayam L.A."/>
            <person name="Ermolaeva M.D."/>
            <person name="Salzberg S.L."/>
            <person name="Delcher A."/>
            <person name="Utterback T.R."/>
            <person name="Weidman J.F."/>
            <person name="Khouri H.M."/>
            <person name="Gill J."/>
            <person name="Mikula A."/>
            <person name="Bishai W."/>
            <person name="Jacobs W.R. Jr."/>
            <person name="Venter J.C."/>
            <person name="Fraser C.M."/>
        </authorList>
    </citation>
    <scope>NUCLEOTIDE SEQUENCE [LARGE SCALE GENOMIC DNA]</scope>
    <source>
        <strain>CDC 1551 / Oshkosh</strain>
    </source>
</reference>
<accession>P9WIE6</accession>
<accession>L0TD44</accession>
<accession>P0A690</accession>
<accession>P71933</accession>
<evidence type="ECO:0000255" key="1"/>
<evidence type="ECO:0000256" key="2">
    <source>
        <dbReference type="SAM" id="MobiDB-lite"/>
    </source>
</evidence>
<evidence type="ECO:0000305" key="3"/>
<gene>
    <name type="primary">PE_PGRS46</name>
    <name type="ordered locus">MT2712</name>
</gene>
<feature type="chain" id="PRO_0000428020" description="Uncharacterized PE-PGRS family protein PE_PGRS46">
    <location>
        <begin position="1"/>
        <end position="778"/>
    </location>
</feature>
<feature type="domain" description="PE" evidence="1">
    <location>
        <begin position="1"/>
        <end position="92"/>
    </location>
</feature>
<feature type="region of interest" description="Disordered" evidence="2">
    <location>
        <begin position="125"/>
        <end position="163"/>
    </location>
</feature>
<feature type="region of interest" description="Disordered" evidence="2">
    <location>
        <begin position="372"/>
        <end position="510"/>
    </location>
</feature>
<feature type="region of interest" description="Disordered" evidence="2">
    <location>
        <begin position="718"/>
        <end position="778"/>
    </location>
</feature>
<feature type="compositionally biased region" description="Gly residues" evidence="2">
    <location>
        <begin position="402"/>
        <end position="429"/>
    </location>
</feature>
<feature type="compositionally biased region" description="Gly residues" evidence="2">
    <location>
        <begin position="436"/>
        <end position="510"/>
    </location>
</feature>
<feature type="compositionally biased region" description="Gly residues" evidence="2">
    <location>
        <begin position="718"/>
        <end position="763"/>
    </location>
</feature>
<name>PG46_MYCTO</name>
<dbReference type="EMBL" id="AE000516">
    <property type="protein sequence ID" value="AAK47026.1"/>
    <property type="status" value="ALT_INIT"/>
    <property type="molecule type" value="Genomic_DNA"/>
</dbReference>
<dbReference type="PIR" id="F70963">
    <property type="entry name" value="F70963"/>
</dbReference>
<dbReference type="RefSeq" id="WP_042507591.1">
    <property type="nucleotide sequence ID" value="NC_002755.2"/>
</dbReference>
<dbReference type="KEGG" id="mtc:MT2712"/>
<dbReference type="HOGENOM" id="CLU_000167_16_10_11"/>
<dbReference type="Proteomes" id="UP000001020">
    <property type="component" value="Chromosome"/>
</dbReference>
<dbReference type="Gene3D" id="1.10.287.850">
    <property type="entry name" value="HP0062-like domain"/>
    <property type="match status" value="1"/>
</dbReference>
<dbReference type="InterPro" id="IPR000084">
    <property type="entry name" value="PE-PGRS_N"/>
</dbReference>
<dbReference type="InterPro" id="IPR048996">
    <property type="entry name" value="PGRS_rpt"/>
</dbReference>
<dbReference type="Pfam" id="PF00934">
    <property type="entry name" value="PE"/>
    <property type="match status" value="1"/>
</dbReference>
<dbReference type="Pfam" id="PF21526">
    <property type="entry name" value="PGRS"/>
    <property type="match status" value="1"/>
</dbReference>
<dbReference type="SUPFAM" id="SSF140459">
    <property type="entry name" value="PE/PPE dimer-like"/>
    <property type="match status" value="1"/>
</dbReference>